<comment type="miscellaneous">
    <text>Stealth proteins are part of a protein family that is conserved from bacteria to higher eukaryotes. Family members were first identified in microbes as proteins that help pathogens to elude the host innate immune system. Microbial stealth proteins are involved in the biosynthesis of exopolysaccharides. Stealth proteins are predicted to function as hexose-1-phosphoryltransferases.</text>
</comment>
<comment type="similarity">
    <text evidence="1">Belongs to the stealth family.</text>
</comment>
<name>Y6023_STRCO</name>
<organism>
    <name type="scientific">Streptomyces coelicolor (strain ATCC BAA-471 / A3(2) / M145)</name>
    <dbReference type="NCBI Taxonomy" id="100226"/>
    <lineage>
        <taxon>Bacteria</taxon>
        <taxon>Bacillati</taxon>
        <taxon>Actinomycetota</taxon>
        <taxon>Actinomycetes</taxon>
        <taxon>Kitasatosporales</taxon>
        <taxon>Streptomycetaceae</taxon>
        <taxon>Streptomyces</taxon>
        <taxon>Streptomyces albidoflavus group</taxon>
    </lineage>
</organism>
<reference key="1">
    <citation type="journal article" date="2002" name="Nature">
        <title>Complete genome sequence of the model actinomycete Streptomyces coelicolor A3(2).</title>
        <authorList>
            <person name="Bentley S.D."/>
            <person name="Chater K.F."/>
            <person name="Cerdeno-Tarraga A.-M."/>
            <person name="Challis G.L."/>
            <person name="Thomson N.R."/>
            <person name="James K.D."/>
            <person name="Harris D.E."/>
            <person name="Quail M.A."/>
            <person name="Kieser H."/>
            <person name="Harper D."/>
            <person name="Bateman A."/>
            <person name="Brown S."/>
            <person name="Chandra G."/>
            <person name="Chen C.W."/>
            <person name="Collins M."/>
            <person name="Cronin A."/>
            <person name="Fraser A."/>
            <person name="Goble A."/>
            <person name="Hidalgo J."/>
            <person name="Hornsby T."/>
            <person name="Howarth S."/>
            <person name="Huang C.-H."/>
            <person name="Kieser T."/>
            <person name="Larke L."/>
            <person name="Murphy L.D."/>
            <person name="Oliver K."/>
            <person name="O'Neil S."/>
            <person name="Rabbinowitsch E."/>
            <person name="Rajandream M.A."/>
            <person name="Rutherford K.M."/>
            <person name="Rutter S."/>
            <person name="Seeger K."/>
            <person name="Saunders D."/>
            <person name="Sharp S."/>
            <person name="Squares R."/>
            <person name="Squares S."/>
            <person name="Taylor K."/>
            <person name="Warren T."/>
            <person name="Wietzorrek A."/>
            <person name="Woodward J.R."/>
            <person name="Barrell B.G."/>
            <person name="Parkhill J."/>
            <person name="Hopwood D.A."/>
        </authorList>
    </citation>
    <scope>NUCLEOTIDE SEQUENCE [LARGE SCALE GENOMIC DNA]</scope>
    <source>
        <strain>ATCC BAA-471 / A3(2) / M145</strain>
    </source>
</reference>
<reference key="2">
    <citation type="journal article" date="2005" name="PLoS Comput. Biol.">
        <title>Stealth proteins: in silico identification of a novel protein family rendering bacterial pathogens invisible to host immune defense.</title>
        <authorList>
            <person name="Sperisen P."/>
            <person name="Schmid C.D."/>
            <person name="Bucher P."/>
            <person name="Zilian O."/>
        </authorList>
    </citation>
    <scope>IDENTIFICATION AS A STEALTH PROTEIN</scope>
    <scope>PREDICTION OF FUNCTION</scope>
</reference>
<keyword id="KW-0270">Exopolysaccharide synthesis</keyword>
<keyword id="KW-1185">Reference proteome</keyword>
<keyword id="KW-0808">Transferase</keyword>
<feature type="chain" id="PRO_0000235963" description="Exopolysaccharide phosphotransferase SCO6023">
    <location>
        <begin position="1"/>
        <end position="586"/>
    </location>
</feature>
<evidence type="ECO:0000305" key="1"/>
<sequence length="586" mass="66010">MSTGNPEASAAVGAYRSLVPAGLRRRVARRVPAGLRTVLKHLLRRLHVLSLASRLFRGFRARRRWPHLFREGERLAALAGHGDRIALVRPTVSPLGLREANLELVVTALEEAGVDYFAVRGTSDFRSVLAVAESDREQVGRALERCAGHGPVYLRACRGETPQARPALAGSRAGRQQARHAAVLRTGMVWSDPTGSLVLGLEHSCDIEFWKPEAGRLVAPRPNRVTQDVSPREPRVTVPVSRLTGFAALHTRRTRSVRTVAACADALPEDVRFPIDVVYTWVDGNDPAWRRRRSAYDGGYHAESANAARYISRDELRYSLRALEQNAPWVRHVHLVTDGQRPAWLNDSHPRLTVVDHSEIFADPAALPTFNSHAIESRLHHIKGLSEHFLYLNDDMFLGRPVTPQDFFLSNGMTRTFFSPSQVPRPDPSPADRPVDAAGKNNRRLLLENFGSVIVQKLRHAPYALRRSVLEEIEREYPEAHWETSHSRFRSPTDISIPSSLYHYYAYFTGRAVPSDIRFAYLDLARPEVARRLGILLARRDRQAFCINDTLSDGHDVDRQTEMLATFLSAYYPVPSPFERKERAAR</sequence>
<proteinExistence type="inferred from homology"/>
<dbReference type="EC" id="2.7.-.-"/>
<dbReference type="EMBL" id="AL939126">
    <property type="protein sequence ID" value="CAA19235.1"/>
    <property type="molecule type" value="Genomic_DNA"/>
</dbReference>
<dbReference type="PIR" id="T34703">
    <property type="entry name" value="T34703"/>
</dbReference>
<dbReference type="RefSeq" id="NP_630134.1">
    <property type="nucleotide sequence ID" value="NC_003888.3"/>
</dbReference>
<dbReference type="RefSeq" id="WP_011030600.1">
    <property type="nucleotide sequence ID" value="NZ_VNID01000009.1"/>
</dbReference>
<dbReference type="SMR" id="O69853"/>
<dbReference type="STRING" id="100226.gene:17763682"/>
<dbReference type="PaxDb" id="100226-SCO6023"/>
<dbReference type="KEGG" id="sco:SCO6023"/>
<dbReference type="PATRIC" id="fig|100226.15.peg.6123"/>
<dbReference type="eggNOG" id="COG0438">
    <property type="taxonomic scope" value="Bacteria"/>
</dbReference>
<dbReference type="HOGENOM" id="CLU_033996_0_0_11"/>
<dbReference type="InParanoid" id="O69853"/>
<dbReference type="OrthoDB" id="9776077at2"/>
<dbReference type="PhylomeDB" id="O69853"/>
<dbReference type="Proteomes" id="UP000001973">
    <property type="component" value="Chromosome"/>
</dbReference>
<dbReference type="GO" id="GO:0016772">
    <property type="term" value="F:transferase activity, transferring phosphorus-containing groups"/>
    <property type="evidence" value="ECO:0007669"/>
    <property type="project" value="InterPro"/>
</dbReference>
<dbReference type="GO" id="GO:0000271">
    <property type="term" value="P:polysaccharide biosynthetic process"/>
    <property type="evidence" value="ECO:0007669"/>
    <property type="project" value="UniProtKB-KW"/>
</dbReference>
<dbReference type="InterPro" id="IPR047141">
    <property type="entry name" value="Stealth"/>
</dbReference>
<dbReference type="InterPro" id="IPR031358">
    <property type="entry name" value="Stealth_CR1"/>
</dbReference>
<dbReference type="InterPro" id="IPR021520">
    <property type="entry name" value="Stealth_CR2"/>
</dbReference>
<dbReference type="InterPro" id="IPR031357">
    <property type="entry name" value="Stealth_CR3"/>
</dbReference>
<dbReference type="InterPro" id="IPR031356">
    <property type="entry name" value="Stealth_CR4"/>
</dbReference>
<dbReference type="PANTHER" id="PTHR24045">
    <property type="match status" value="1"/>
</dbReference>
<dbReference type="PANTHER" id="PTHR24045:SF0">
    <property type="entry name" value="N-ACETYLGLUCOSAMINE-1-PHOSPHOTRANSFERASE SUBUNITS ALPHA_BETA"/>
    <property type="match status" value="1"/>
</dbReference>
<dbReference type="Pfam" id="PF17101">
    <property type="entry name" value="Stealth_CR1"/>
    <property type="match status" value="1"/>
</dbReference>
<dbReference type="Pfam" id="PF11380">
    <property type="entry name" value="Stealth_CR2"/>
    <property type="match status" value="1"/>
</dbReference>
<dbReference type="Pfam" id="PF17102">
    <property type="entry name" value="Stealth_CR3"/>
    <property type="match status" value="1"/>
</dbReference>
<dbReference type="Pfam" id="PF17103">
    <property type="entry name" value="Stealth_CR4"/>
    <property type="match status" value="1"/>
</dbReference>
<protein>
    <recommendedName>
        <fullName>Exopolysaccharide phosphotransferase SCO6023</fullName>
        <ecNumber>2.7.-.-</ecNumber>
    </recommendedName>
    <alternativeName>
        <fullName>Stealth protein SCO6023</fullName>
    </alternativeName>
</protein>
<accession>O69853</accession>
<gene>
    <name type="ordered locus">SCO6023</name>
    <name type="ORF">SC1C3.11</name>
</gene>